<feature type="propeptide" id="PRO_0000431150" evidence="1">
    <location>
        <begin position="1"/>
        <end position="14"/>
    </location>
</feature>
<feature type="chain" id="PRO_0000361393" description="Photosystem II CP43 reaction center protein" evidence="1">
    <location>
        <begin position="15"/>
        <end position="473"/>
    </location>
</feature>
<feature type="transmembrane region" description="Helical" evidence="1">
    <location>
        <begin position="69"/>
        <end position="93"/>
    </location>
</feature>
<feature type="transmembrane region" description="Helical" evidence="1">
    <location>
        <begin position="134"/>
        <end position="155"/>
    </location>
</feature>
<feature type="transmembrane region" description="Helical" evidence="1">
    <location>
        <begin position="178"/>
        <end position="200"/>
    </location>
</feature>
<feature type="transmembrane region" description="Helical" evidence="1">
    <location>
        <begin position="255"/>
        <end position="275"/>
    </location>
</feature>
<feature type="transmembrane region" description="Helical" evidence="1">
    <location>
        <begin position="291"/>
        <end position="312"/>
    </location>
</feature>
<feature type="transmembrane region" description="Helical" evidence="1">
    <location>
        <begin position="447"/>
        <end position="471"/>
    </location>
</feature>
<feature type="binding site" evidence="1">
    <location>
        <position position="367"/>
    </location>
    <ligand>
        <name>[CaMn4O5] cluster</name>
        <dbReference type="ChEBI" id="CHEBI:189552"/>
    </ligand>
</feature>
<feature type="modified residue" description="N-acetylthreonine" evidence="1">
    <location>
        <position position="15"/>
    </location>
</feature>
<feature type="modified residue" description="Phosphothreonine" evidence="1">
    <location>
        <position position="15"/>
    </location>
</feature>
<organism>
    <name type="scientific">Helianthus annuus</name>
    <name type="common">Common sunflower</name>
    <dbReference type="NCBI Taxonomy" id="4232"/>
    <lineage>
        <taxon>Eukaryota</taxon>
        <taxon>Viridiplantae</taxon>
        <taxon>Streptophyta</taxon>
        <taxon>Embryophyta</taxon>
        <taxon>Tracheophyta</taxon>
        <taxon>Spermatophyta</taxon>
        <taxon>Magnoliopsida</taxon>
        <taxon>eudicotyledons</taxon>
        <taxon>Gunneridae</taxon>
        <taxon>Pentapetalae</taxon>
        <taxon>asterids</taxon>
        <taxon>campanulids</taxon>
        <taxon>Asterales</taxon>
        <taxon>Asteraceae</taxon>
        <taxon>Asteroideae</taxon>
        <taxon>Heliantheae alliance</taxon>
        <taxon>Heliantheae</taxon>
        <taxon>Helianthus</taxon>
    </lineage>
</organism>
<protein>
    <recommendedName>
        <fullName evidence="1">Photosystem II CP43 reaction center protein</fullName>
    </recommendedName>
    <alternativeName>
        <fullName evidence="1">PSII 43 kDa protein</fullName>
    </alternativeName>
    <alternativeName>
        <fullName evidence="1">Protein CP-43</fullName>
    </alternativeName>
</protein>
<proteinExistence type="inferred from homology"/>
<evidence type="ECO:0000255" key="1">
    <source>
        <dbReference type="HAMAP-Rule" id="MF_01496"/>
    </source>
</evidence>
<dbReference type="EMBL" id="DQ383815">
    <property type="protein sequence ID" value="ABD47142.1"/>
    <property type="molecule type" value="Genomic_DNA"/>
</dbReference>
<dbReference type="RefSeq" id="YP_588113.1">
    <property type="nucleotide sequence ID" value="NC_007977.1"/>
</dbReference>
<dbReference type="SMR" id="Q1KXW3"/>
<dbReference type="GeneID" id="4055585"/>
<dbReference type="KEGG" id="han:4055585"/>
<dbReference type="OrthoDB" id="1926060at2759"/>
<dbReference type="PhylomeDB" id="Q1KXW3"/>
<dbReference type="GO" id="GO:0009535">
    <property type="term" value="C:chloroplast thylakoid membrane"/>
    <property type="evidence" value="ECO:0007669"/>
    <property type="project" value="UniProtKB-SubCell"/>
</dbReference>
<dbReference type="GO" id="GO:0009523">
    <property type="term" value="C:photosystem II"/>
    <property type="evidence" value="ECO:0007669"/>
    <property type="project" value="UniProtKB-KW"/>
</dbReference>
<dbReference type="GO" id="GO:0016168">
    <property type="term" value="F:chlorophyll binding"/>
    <property type="evidence" value="ECO:0007669"/>
    <property type="project" value="UniProtKB-UniRule"/>
</dbReference>
<dbReference type="GO" id="GO:0045156">
    <property type="term" value="F:electron transporter, transferring electrons within the cyclic electron transport pathway of photosynthesis activity"/>
    <property type="evidence" value="ECO:0007669"/>
    <property type="project" value="InterPro"/>
</dbReference>
<dbReference type="GO" id="GO:0046872">
    <property type="term" value="F:metal ion binding"/>
    <property type="evidence" value="ECO:0007669"/>
    <property type="project" value="UniProtKB-KW"/>
</dbReference>
<dbReference type="GO" id="GO:0009772">
    <property type="term" value="P:photosynthetic electron transport in photosystem II"/>
    <property type="evidence" value="ECO:0007669"/>
    <property type="project" value="InterPro"/>
</dbReference>
<dbReference type="FunFam" id="1.10.10.670:FF:000001">
    <property type="entry name" value="Photosystem II CP43 reaction center protein"/>
    <property type="match status" value="1"/>
</dbReference>
<dbReference type="Gene3D" id="1.10.10.670">
    <property type="entry name" value="photosystem ii from thermosynechococcus elongatus"/>
    <property type="match status" value="1"/>
</dbReference>
<dbReference type="HAMAP" id="MF_01496">
    <property type="entry name" value="PSII_PsbC_CP43"/>
    <property type="match status" value="1"/>
</dbReference>
<dbReference type="InterPro" id="IPR000932">
    <property type="entry name" value="PS_antenna-like"/>
</dbReference>
<dbReference type="InterPro" id="IPR036001">
    <property type="entry name" value="PS_II_antenna-like_sf"/>
</dbReference>
<dbReference type="InterPro" id="IPR005869">
    <property type="entry name" value="PSII_PsbC"/>
</dbReference>
<dbReference type="InterPro" id="IPR044900">
    <property type="entry name" value="PSII_PsbC_sf"/>
</dbReference>
<dbReference type="NCBIfam" id="TIGR01153">
    <property type="entry name" value="psbC"/>
    <property type="match status" value="1"/>
</dbReference>
<dbReference type="Pfam" id="PF00421">
    <property type="entry name" value="PSII"/>
    <property type="match status" value="1"/>
</dbReference>
<dbReference type="SUPFAM" id="SSF161077">
    <property type="entry name" value="Photosystem II antenna protein-like"/>
    <property type="match status" value="1"/>
</dbReference>
<sequence>MKTLYSLRRFYPVETLFNGTLALAGRDQETTGFAWWAGNARLINLSGKLLGAHVAHAGLIVFWAGAMNLFEVAHFVPEKPMYEQGLILLPHLATLGWGVGPGGEVIDTFPYFVSGVLHLISSAVLGFGGIYHALLGPETLEESFPFFGYVWKDRNKMTTILGIHLILLGLGAFLLVFKALYFGGVYDTWAPGGGDVRKITNLTLSPSIIFGYLLKSPFGGEGWIVSVDDLEDIIGGHVWLGSICILGGIWHILTKPFAWARRALVWSGEAYLSYSLAAISVFGFIACCFVWFNNTAYPSEFYGPTGPEASQAQAFTFLVRDQRLGANVGSAQGPTGLGKYLMRSPTGEVIFGGETMRFWDLRAPWLEPLRGPNGLDLSRLKKDIQPWQERRSAEYMTHAPLGSLNSVGGVATEINAVNYVSPRSWLATSHFVLGFFFFVGHLWHAGRARAAAAGFEKGIDRDFEPVLSMTPLN</sequence>
<accession>Q1KXW3</accession>
<gene>
    <name evidence="1" type="primary">psbC</name>
</gene>
<geneLocation type="chloroplast"/>
<name>PSBC_HELAN</name>
<comment type="function">
    <text evidence="1">One of the components of the core complex of photosystem II (PSII). It binds chlorophyll and helps catalyze the primary light-induced photochemical processes of PSII. PSII is a light-driven water:plastoquinone oxidoreductase, using light energy to abstract electrons from H(2)O, generating O(2) and a proton gradient subsequently used for ATP formation.</text>
</comment>
<comment type="cofactor">
    <text evidence="1">Binds multiple chlorophylls and provides some of the ligands for the Ca-4Mn-5O cluster of the oxygen-evolving complex. It may also provide a ligand for a Cl- that is required for oxygen evolution. PSII binds additional chlorophylls, carotenoids and specific lipids.</text>
</comment>
<comment type="subunit">
    <text evidence="1">PSII is composed of 1 copy each of membrane proteins PsbA, PsbB, PsbC, PsbD, PsbE, PsbF, PsbH, PsbI, PsbJ, PsbK, PsbL, PsbM, PsbT, PsbX, PsbY, PsbZ, Psb30/Ycf12, at least 3 peripheral proteins of the oxygen-evolving complex and a large number of cofactors. It forms dimeric complexes.</text>
</comment>
<comment type="subcellular location">
    <subcellularLocation>
        <location evidence="1">Plastid</location>
        <location evidence="1">Chloroplast thylakoid membrane</location>
        <topology evidence="1">Multi-pass membrane protein</topology>
    </subcellularLocation>
</comment>
<comment type="similarity">
    <text evidence="1">Belongs to the PsbB/PsbC family. PsbC subfamily.</text>
</comment>
<reference key="1">
    <citation type="submission" date="2006-01" db="EMBL/GenBank/DDBJ databases">
        <title>A comparison of the first two published chloroplast genomes in Asteraceae: Lactuca and Helianthus.</title>
        <authorList>
            <person name="Timme R.E."/>
            <person name="Kuehl J.V."/>
            <person name="Boore J.L."/>
            <person name="Jansen R.K."/>
        </authorList>
    </citation>
    <scope>NUCLEOTIDE SEQUENCE [LARGE SCALE GENOMIC DNA]</scope>
    <source>
        <strain>cv. HA383</strain>
    </source>
</reference>
<keyword id="KW-0007">Acetylation</keyword>
<keyword id="KW-0148">Chlorophyll</keyword>
<keyword id="KW-0150">Chloroplast</keyword>
<keyword id="KW-0157">Chromophore</keyword>
<keyword id="KW-0464">Manganese</keyword>
<keyword id="KW-0472">Membrane</keyword>
<keyword id="KW-0479">Metal-binding</keyword>
<keyword id="KW-0597">Phosphoprotein</keyword>
<keyword id="KW-0602">Photosynthesis</keyword>
<keyword id="KW-0604">Photosystem II</keyword>
<keyword id="KW-0934">Plastid</keyword>
<keyword id="KW-0793">Thylakoid</keyword>
<keyword id="KW-0812">Transmembrane</keyword>
<keyword id="KW-1133">Transmembrane helix</keyword>